<proteinExistence type="inferred from homology"/>
<gene>
    <name evidence="1" type="primary">aaeA</name>
    <name type="ordered locus">SeAg_B3556</name>
</gene>
<organism>
    <name type="scientific">Salmonella agona (strain SL483)</name>
    <dbReference type="NCBI Taxonomy" id="454166"/>
    <lineage>
        <taxon>Bacteria</taxon>
        <taxon>Pseudomonadati</taxon>
        <taxon>Pseudomonadota</taxon>
        <taxon>Gammaproteobacteria</taxon>
        <taxon>Enterobacterales</taxon>
        <taxon>Enterobacteriaceae</taxon>
        <taxon>Salmonella</taxon>
    </lineage>
</organism>
<reference key="1">
    <citation type="journal article" date="2011" name="J. Bacteriol.">
        <title>Comparative genomics of 28 Salmonella enterica isolates: evidence for CRISPR-mediated adaptive sublineage evolution.</title>
        <authorList>
            <person name="Fricke W.F."/>
            <person name="Mammel M.K."/>
            <person name="McDermott P.F."/>
            <person name="Tartera C."/>
            <person name="White D.G."/>
            <person name="Leclerc J.E."/>
            <person name="Ravel J."/>
            <person name="Cebula T.A."/>
        </authorList>
    </citation>
    <scope>NUCLEOTIDE SEQUENCE [LARGE SCALE GENOMIC DNA]</scope>
    <source>
        <strain>SL483</strain>
    </source>
</reference>
<dbReference type="EMBL" id="CP001138">
    <property type="protein sequence ID" value="ACH50813.1"/>
    <property type="molecule type" value="Genomic_DNA"/>
</dbReference>
<dbReference type="RefSeq" id="WP_000855138.1">
    <property type="nucleotide sequence ID" value="NC_011149.1"/>
</dbReference>
<dbReference type="SMR" id="B5F7M5"/>
<dbReference type="KEGG" id="sea:SeAg_B3556"/>
<dbReference type="HOGENOM" id="CLU_018816_15_2_6"/>
<dbReference type="Proteomes" id="UP000008819">
    <property type="component" value="Chromosome"/>
</dbReference>
<dbReference type="GO" id="GO:0005886">
    <property type="term" value="C:plasma membrane"/>
    <property type="evidence" value="ECO:0007669"/>
    <property type="project" value="UniProtKB-SubCell"/>
</dbReference>
<dbReference type="GO" id="GO:0022857">
    <property type="term" value="F:transmembrane transporter activity"/>
    <property type="evidence" value="ECO:0007669"/>
    <property type="project" value="UniProtKB-UniRule"/>
</dbReference>
<dbReference type="FunFam" id="2.40.30.170:FF:000002">
    <property type="entry name" value="p-hydroxybenzoic acid efflux pump subunit AaeA"/>
    <property type="match status" value="1"/>
</dbReference>
<dbReference type="Gene3D" id="2.40.30.170">
    <property type="match status" value="1"/>
</dbReference>
<dbReference type="Gene3D" id="2.40.50.100">
    <property type="match status" value="1"/>
</dbReference>
<dbReference type="HAMAP" id="MF_01544">
    <property type="entry name" value="AaeA"/>
    <property type="match status" value="1"/>
</dbReference>
<dbReference type="InterPro" id="IPR043602">
    <property type="entry name" value="CusB-like_dom_1"/>
</dbReference>
<dbReference type="InterPro" id="IPR032317">
    <property type="entry name" value="CusB_D23"/>
</dbReference>
<dbReference type="InterPro" id="IPR050393">
    <property type="entry name" value="MFP_Efflux_Pump"/>
</dbReference>
<dbReference type="InterPro" id="IPR022871">
    <property type="entry name" value="PHBA_efflux_pump_AaeA"/>
</dbReference>
<dbReference type="InterPro" id="IPR006143">
    <property type="entry name" value="RND_pump_MFP"/>
</dbReference>
<dbReference type="NCBIfam" id="NF007850">
    <property type="entry name" value="PRK10559.1"/>
    <property type="match status" value="1"/>
</dbReference>
<dbReference type="NCBIfam" id="TIGR01730">
    <property type="entry name" value="RND_mfp"/>
    <property type="match status" value="1"/>
</dbReference>
<dbReference type="PANTHER" id="PTHR30367:SF12">
    <property type="entry name" value="P-HYDROXYBENZOIC ACID EFFLUX PUMP SUBUNIT AAEA"/>
    <property type="match status" value="1"/>
</dbReference>
<dbReference type="PANTHER" id="PTHR30367">
    <property type="entry name" value="P-HYDROXYBENZOIC ACID EFFLUX PUMP SUBUNIT AAEA-RELATED"/>
    <property type="match status" value="1"/>
</dbReference>
<dbReference type="Pfam" id="PF00529">
    <property type="entry name" value="CusB_dom_1"/>
    <property type="match status" value="1"/>
</dbReference>
<dbReference type="Pfam" id="PF16576">
    <property type="entry name" value="HlyD_D23"/>
    <property type="match status" value="1"/>
</dbReference>
<dbReference type="SUPFAM" id="SSF111369">
    <property type="entry name" value="HlyD-like secretion proteins"/>
    <property type="match status" value="1"/>
</dbReference>
<evidence type="ECO:0000255" key="1">
    <source>
        <dbReference type="HAMAP-Rule" id="MF_01544"/>
    </source>
</evidence>
<sequence length="310" mass="34575">MKTLTRKLSRTAITLVLVILAFIAIFRAWVYYTESPWTRDARFSADVVAIAPDVAGLITHVNVHDNQLVKKDQVLFTIDQPRYQKALAEAEADVAYYQVLAQEKRQEASRRNRLGVQAMSREEIDQANNVLQTVLHQLAKAQATRDLAKLDLERTVIRAPADGWVTNLNVYAGEFITRGSTAVALVKKNSFYVQAYMEETKLEGVRPGYRAEITPLGSNRVLKGTVDSVAAGVTNASSTSDAKGMATIDSNLEWVRLAQRVPVRIRLDEQQGNLWPAGTTATVVITGKQDRDASQDSFFRKLAHRLREFG</sequence>
<feature type="chain" id="PRO_1000146722" description="p-hydroxybenzoic acid efflux pump subunit AaeA">
    <location>
        <begin position="1"/>
        <end position="310"/>
    </location>
</feature>
<feature type="transmembrane region" description="Helical" evidence="1">
    <location>
        <begin position="12"/>
        <end position="32"/>
    </location>
</feature>
<protein>
    <recommendedName>
        <fullName evidence="1">p-hydroxybenzoic acid efflux pump subunit AaeA</fullName>
        <shortName evidence="1">pHBA efflux pump protein A</shortName>
    </recommendedName>
</protein>
<keyword id="KW-0997">Cell inner membrane</keyword>
<keyword id="KW-1003">Cell membrane</keyword>
<keyword id="KW-0472">Membrane</keyword>
<keyword id="KW-0812">Transmembrane</keyword>
<keyword id="KW-1133">Transmembrane helix</keyword>
<keyword id="KW-0813">Transport</keyword>
<name>AAEA_SALA4</name>
<comment type="function">
    <text evidence="1">Forms an efflux pump with AaeB.</text>
</comment>
<comment type="subcellular location">
    <subcellularLocation>
        <location evidence="1">Cell inner membrane</location>
        <topology evidence="1">Single-pass membrane protein</topology>
    </subcellularLocation>
</comment>
<comment type="similarity">
    <text evidence="1">Belongs to the membrane fusion protein (MFP) (TC 8.A.1) family.</text>
</comment>
<accession>B5F7M5</accession>